<organism>
    <name type="scientific">Schizosaccharomyces pombe (strain 972 / ATCC 24843)</name>
    <name type="common">Fission yeast</name>
    <dbReference type="NCBI Taxonomy" id="284812"/>
    <lineage>
        <taxon>Eukaryota</taxon>
        <taxon>Fungi</taxon>
        <taxon>Dikarya</taxon>
        <taxon>Ascomycota</taxon>
        <taxon>Taphrinomycotina</taxon>
        <taxon>Schizosaccharomycetes</taxon>
        <taxon>Schizosaccharomycetales</taxon>
        <taxon>Schizosaccharomycetaceae</taxon>
        <taxon>Schizosaccharomyces</taxon>
    </lineage>
</organism>
<proteinExistence type="evidence at protein level"/>
<accession>O94321</accession>
<protein>
    <recommendedName>
        <fullName>Multistep phosphorelay regulator 1</fullName>
    </recommendedName>
</protein>
<evidence type="ECO:0000255" key="1">
    <source>
        <dbReference type="PROSITE-ProRule" id="PRU00110"/>
    </source>
</evidence>
<evidence type="ECO:0000256" key="2">
    <source>
        <dbReference type="SAM" id="MobiDB-lite"/>
    </source>
</evidence>
<evidence type="ECO:0000269" key="3">
    <source>
    </source>
</evidence>
<sequence length="295" mass="32550">MSVYRDNMYMKYDRNFENRVARRNGQARNASLAKTLHDSGIAERARSPSGSAIPHAYRVMNGSGANDTSLPLTSNPAYVALTSRISSSKSENNQQLAANETAGAPEGTEETVDISNSISDDHANAKNLPAASVKALVGAGVLSDELSVIAYDMSFEDELIQDKQLIDHSVFDQLLEMDDDDEHEFSKSIVWNYFEQAETTIADLQKALEAKDLKKLSSLGHFLKGSSAVLGLTKMRKVCERIQNYGSLRSRDGVMKLPSEEIALDLISKSLSVVNDFYKDARAYLLDFYEKNSST</sequence>
<dbReference type="EMBL" id="CU329671">
    <property type="protein sequence ID" value="CAA22174.1"/>
    <property type="molecule type" value="Genomic_DNA"/>
</dbReference>
<dbReference type="PIR" id="T40654">
    <property type="entry name" value="T40654"/>
</dbReference>
<dbReference type="RefSeq" id="NP_595482.1">
    <property type="nucleotide sequence ID" value="NM_001021393.2"/>
</dbReference>
<dbReference type="SMR" id="O94321"/>
<dbReference type="BioGRID" id="277692">
    <property type="interactions" value="195"/>
</dbReference>
<dbReference type="FunCoup" id="O94321">
    <property type="interactions" value="248"/>
</dbReference>
<dbReference type="IntAct" id="O94321">
    <property type="interactions" value="4"/>
</dbReference>
<dbReference type="STRING" id="284812.O94321"/>
<dbReference type="iPTMnet" id="O94321"/>
<dbReference type="PaxDb" id="4896-SPBC725.02.1"/>
<dbReference type="EnsemblFungi" id="SPBC725.02.1">
    <property type="protein sequence ID" value="SPBC725.02.1:pep"/>
    <property type="gene ID" value="SPBC725.02"/>
</dbReference>
<dbReference type="GeneID" id="2541178"/>
<dbReference type="KEGG" id="spo:2541178"/>
<dbReference type="PomBase" id="SPBC725.02">
    <property type="gene designation" value="mpr1"/>
</dbReference>
<dbReference type="VEuPathDB" id="FungiDB:SPBC725.02"/>
<dbReference type="eggNOG" id="KOG4747">
    <property type="taxonomic scope" value="Eukaryota"/>
</dbReference>
<dbReference type="HOGENOM" id="CLU_082193_0_0_1"/>
<dbReference type="InParanoid" id="O94321"/>
<dbReference type="OMA" id="DDDQHEF"/>
<dbReference type="PRO" id="PR:O94321"/>
<dbReference type="Proteomes" id="UP000002485">
    <property type="component" value="Chromosome II"/>
</dbReference>
<dbReference type="GO" id="GO:0005737">
    <property type="term" value="C:cytoplasm"/>
    <property type="evidence" value="ECO:0000314"/>
    <property type="project" value="PomBase"/>
</dbReference>
<dbReference type="GO" id="GO:0005829">
    <property type="term" value="C:cytosol"/>
    <property type="evidence" value="ECO:0007005"/>
    <property type="project" value="PomBase"/>
</dbReference>
<dbReference type="GO" id="GO:0005634">
    <property type="term" value="C:nucleus"/>
    <property type="evidence" value="ECO:0000314"/>
    <property type="project" value="PomBase"/>
</dbReference>
<dbReference type="GO" id="GO:0009927">
    <property type="term" value="F:histidine phosphotransfer kinase activity"/>
    <property type="evidence" value="ECO:0000314"/>
    <property type="project" value="PomBase"/>
</dbReference>
<dbReference type="GO" id="GO:0043424">
    <property type="term" value="F:protein histidine kinase binding"/>
    <property type="evidence" value="ECO:0000318"/>
    <property type="project" value="GO_Central"/>
</dbReference>
<dbReference type="GO" id="GO:0010972">
    <property type="term" value="P:negative regulation of G2/M transition of mitotic cell cycle"/>
    <property type="evidence" value="ECO:0000314"/>
    <property type="project" value="PomBase"/>
</dbReference>
<dbReference type="GO" id="GO:0000160">
    <property type="term" value="P:phosphorelay signal transduction system"/>
    <property type="evidence" value="ECO:0000314"/>
    <property type="project" value="PomBase"/>
</dbReference>
<dbReference type="GO" id="GO:1900745">
    <property type="term" value="P:positive regulation of p38MAPK cascade"/>
    <property type="evidence" value="ECO:0000315"/>
    <property type="project" value="PomBase"/>
</dbReference>
<dbReference type="CDD" id="cd00088">
    <property type="entry name" value="HPT"/>
    <property type="match status" value="1"/>
</dbReference>
<dbReference type="Gene3D" id="1.20.120.160">
    <property type="entry name" value="HPT domain"/>
    <property type="match status" value="1"/>
</dbReference>
<dbReference type="InterPro" id="IPR045871">
    <property type="entry name" value="AHP1-5/YPD1"/>
</dbReference>
<dbReference type="InterPro" id="IPR036641">
    <property type="entry name" value="HPT_dom_sf"/>
</dbReference>
<dbReference type="InterPro" id="IPR008207">
    <property type="entry name" value="Sig_transdc_His_kin_Hpt_dom"/>
</dbReference>
<dbReference type="PANTHER" id="PTHR28242">
    <property type="entry name" value="PHOSPHORELAY INTERMEDIATE PROTEIN YPD1"/>
    <property type="match status" value="1"/>
</dbReference>
<dbReference type="PANTHER" id="PTHR28242:SF52">
    <property type="entry name" value="PHOSPHORELAY INTERMEDIATE PROTEIN YPD1"/>
    <property type="match status" value="1"/>
</dbReference>
<dbReference type="Pfam" id="PF01627">
    <property type="entry name" value="Hpt"/>
    <property type="match status" value="1"/>
</dbReference>
<dbReference type="SMART" id="SM00073">
    <property type="entry name" value="HPT"/>
    <property type="match status" value="1"/>
</dbReference>
<dbReference type="SUPFAM" id="SSF47226">
    <property type="entry name" value="Histidine-containing phosphotransfer domain, HPT domain"/>
    <property type="match status" value="1"/>
</dbReference>
<dbReference type="PROSITE" id="PS50894">
    <property type="entry name" value="HPT"/>
    <property type="match status" value="1"/>
</dbReference>
<comment type="function">
    <text evidence="3">Binds to the msc4 response regulator which is part of a multistep phosphorelay system that transmits oxidative stress signals to the spc1 MAPK cascade.</text>
</comment>
<feature type="chain" id="PRO_0000096558" description="Multistep phosphorelay regulator 1">
    <location>
        <begin position="1"/>
        <end position="295"/>
    </location>
</feature>
<feature type="domain" description="HPt" evidence="1">
    <location>
        <begin position="182"/>
        <end position="284"/>
    </location>
</feature>
<feature type="region of interest" description="Disordered" evidence="2">
    <location>
        <begin position="89"/>
        <end position="110"/>
    </location>
</feature>
<feature type="compositionally biased region" description="Low complexity" evidence="2">
    <location>
        <begin position="97"/>
        <end position="106"/>
    </location>
</feature>
<feature type="modified residue" description="Phosphohistidine" evidence="1">
    <location>
        <position position="221"/>
    </location>
</feature>
<feature type="mutagenesis site" description="Oxidative stress signaling to spc1 did not occur." evidence="3">
    <original>H</original>
    <variation>Q</variation>
    <location>
        <position position="221"/>
    </location>
</feature>
<reference key="1">
    <citation type="journal article" date="2000" name="Mol. Biol. Cell">
        <title>Multistep phosphorelay proteins transmit oxidative stress signals to the fission yeast stress-activated protein kinase.</title>
        <authorList>
            <person name="Nguyen A.N."/>
            <person name="Lee A."/>
            <person name="Place W."/>
            <person name="Shiozaki K."/>
        </authorList>
    </citation>
    <scope>NUCLEOTIDE SEQUENCE [GENOMIC DNA]</scope>
    <scope>MUTAGENESIS OF HIS-221</scope>
    <scope>FUNCTION</scope>
</reference>
<reference key="2">
    <citation type="journal article" date="2002" name="Nature">
        <title>The genome sequence of Schizosaccharomyces pombe.</title>
        <authorList>
            <person name="Wood V."/>
            <person name="Gwilliam R."/>
            <person name="Rajandream M.A."/>
            <person name="Lyne M.H."/>
            <person name="Lyne R."/>
            <person name="Stewart A."/>
            <person name="Sgouros J.G."/>
            <person name="Peat N."/>
            <person name="Hayles J."/>
            <person name="Baker S.G."/>
            <person name="Basham D."/>
            <person name="Bowman S."/>
            <person name="Brooks K."/>
            <person name="Brown D."/>
            <person name="Brown S."/>
            <person name="Chillingworth T."/>
            <person name="Churcher C.M."/>
            <person name="Collins M."/>
            <person name="Connor R."/>
            <person name="Cronin A."/>
            <person name="Davis P."/>
            <person name="Feltwell T."/>
            <person name="Fraser A."/>
            <person name="Gentles S."/>
            <person name="Goble A."/>
            <person name="Hamlin N."/>
            <person name="Harris D.E."/>
            <person name="Hidalgo J."/>
            <person name="Hodgson G."/>
            <person name="Holroyd S."/>
            <person name="Hornsby T."/>
            <person name="Howarth S."/>
            <person name="Huckle E.J."/>
            <person name="Hunt S."/>
            <person name="Jagels K."/>
            <person name="James K.D."/>
            <person name="Jones L."/>
            <person name="Jones M."/>
            <person name="Leather S."/>
            <person name="McDonald S."/>
            <person name="McLean J."/>
            <person name="Mooney P."/>
            <person name="Moule S."/>
            <person name="Mungall K.L."/>
            <person name="Murphy L.D."/>
            <person name="Niblett D."/>
            <person name="Odell C."/>
            <person name="Oliver K."/>
            <person name="O'Neil S."/>
            <person name="Pearson D."/>
            <person name="Quail M.A."/>
            <person name="Rabbinowitsch E."/>
            <person name="Rutherford K.M."/>
            <person name="Rutter S."/>
            <person name="Saunders D."/>
            <person name="Seeger K."/>
            <person name="Sharp S."/>
            <person name="Skelton J."/>
            <person name="Simmonds M.N."/>
            <person name="Squares R."/>
            <person name="Squares S."/>
            <person name="Stevens K."/>
            <person name="Taylor K."/>
            <person name="Taylor R.G."/>
            <person name="Tivey A."/>
            <person name="Walsh S.V."/>
            <person name="Warren T."/>
            <person name="Whitehead S."/>
            <person name="Woodward J.R."/>
            <person name="Volckaert G."/>
            <person name="Aert R."/>
            <person name="Robben J."/>
            <person name="Grymonprez B."/>
            <person name="Weltjens I."/>
            <person name="Vanstreels E."/>
            <person name="Rieger M."/>
            <person name="Schaefer M."/>
            <person name="Mueller-Auer S."/>
            <person name="Gabel C."/>
            <person name="Fuchs M."/>
            <person name="Duesterhoeft A."/>
            <person name="Fritzc C."/>
            <person name="Holzer E."/>
            <person name="Moestl D."/>
            <person name="Hilbert H."/>
            <person name="Borzym K."/>
            <person name="Langer I."/>
            <person name="Beck A."/>
            <person name="Lehrach H."/>
            <person name="Reinhardt R."/>
            <person name="Pohl T.M."/>
            <person name="Eger P."/>
            <person name="Zimmermann W."/>
            <person name="Wedler H."/>
            <person name="Wambutt R."/>
            <person name="Purnelle B."/>
            <person name="Goffeau A."/>
            <person name="Cadieu E."/>
            <person name="Dreano S."/>
            <person name="Gloux S."/>
            <person name="Lelaure V."/>
            <person name="Mottier S."/>
            <person name="Galibert F."/>
            <person name="Aves S.J."/>
            <person name="Xiang Z."/>
            <person name="Hunt C."/>
            <person name="Moore K."/>
            <person name="Hurst S.M."/>
            <person name="Lucas M."/>
            <person name="Rochet M."/>
            <person name="Gaillardin C."/>
            <person name="Tallada V.A."/>
            <person name="Garzon A."/>
            <person name="Thode G."/>
            <person name="Daga R.R."/>
            <person name="Cruzado L."/>
            <person name="Jimenez J."/>
            <person name="Sanchez M."/>
            <person name="del Rey F."/>
            <person name="Benito J."/>
            <person name="Dominguez A."/>
            <person name="Revuelta J.L."/>
            <person name="Moreno S."/>
            <person name="Armstrong J."/>
            <person name="Forsburg S.L."/>
            <person name="Cerutti L."/>
            <person name="Lowe T."/>
            <person name="McCombie W.R."/>
            <person name="Paulsen I."/>
            <person name="Potashkin J."/>
            <person name="Shpakovski G.V."/>
            <person name="Ussery D."/>
            <person name="Barrell B.G."/>
            <person name="Nurse P."/>
        </authorList>
    </citation>
    <scope>NUCLEOTIDE SEQUENCE [LARGE SCALE GENOMIC DNA]</scope>
    <source>
        <strain>972 / ATCC 24843</strain>
    </source>
</reference>
<gene>
    <name type="primary">mpr1</name>
    <name type="synonym">spy1</name>
    <name type="ORF">SPBC725.02</name>
</gene>
<keyword id="KW-0597">Phosphoprotein</keyword>
<keyword id="KW-1185">Reference proteome</keyword>
<name>MPR1_SCHPO</name>